<protein>
    <recommendedName>
        <fullName evidence="1">Eukaryotic translation initiation factor 3 subunit L</fullName>
        <shortName evidence="1">eIF3l</shortName>
    </recommendedName>
</protein>
<keyword id="KW-0963">Cytoplasm</keyword>
<keyword id="KW-0396">Initiation factor</keyword>
<keyword id="KW-0648">Protein biosynthesis</keyword>
<keyword id="KW-1185">Reference proteome</keyword>
<accession>Q9VTU4</accession>
<sequence length="539" mass="63223">MYGGDEYATNSDYYDDYAHTGDPQLDMEYERNYYAARMPDNVKYFLINFCQAIKEGNLYDIQNMYENTFPQISDHHFDKTAWPEEQEVAAIVDNDKVFLILYKELYYRHIHARIPGGPKLEQRINSFFNYCDFFNLIISAQNPVMLELPDIWLWELVDEFVYQFQNFAQYRARLTEKSQDEIQQLCVNHSNEWSILCILNVLHSLVDISNIKKQLEAISQGVDPQTVAGDFGKLSFYKMLGYFSLVGLLRVHSLLGDYYQAIKVLEPIEIHKKSAYSHIPACQISTSYYVGFAYMMMRRYADAIRTFSDILLYIQRTKQLYSTRSYQNDQINKQAEQMYHLLAICLVLHPQCIDESIQQVLREKNYHDAMFKMQCGDLEVFKSFFVFACPRFVSPCPPAVDAPMDDYVKDPMEHQLQVFMDEVRQQKDLPTTRSYLKLYTTLPLTKLASFIDPNASEDDVSKLLIRLLCFKHKMRNLVWSKGPSGLEGTFKSGSELDFYIDDDMIHIADTKVSHRYGDFFVRKILKFNDLNRKLKNINI</sequence>
<name>EIF3L_DROME</name>
<proteinExistence type="evidence at protein level"/>
<organism>
    <name type="scientific">Drosophila melanogaster</name>
    <name type="common">Fruit fly</name>
    <dbReference type="NCBI Taxonomy" id="7227"/>
    <lineage>
        <taxon>Eukaryota</taxon>
        <taxon>Metazoa</taxon>
        <taxon>Ecdysozoa</taxon>
        <taxon>Arthropoda</taxon>
        <taxon>Hexapoda</taxon>
        <taxon>Insecta</taxon>
        <taxon>Pterygota</taxon>
        <taxon>Neoptera</taxon>
        <taxon>Endopterygota</taxon>
        <taxon>Diptera</taxon>
        <taxon>Brachycera</taxon>
        <taxon>Muscomorpha</taxon>
        <taxon>Ephydroidea</taxon>
        <taxon>Drosophilidae</taxon>
        <taxon>Drosophila</taxon>
        <taxon>Sophophora</taxon>
    </lineage>
</organism>
<dbReference type="EMBL" id="AE014296">
    <property type="protein sequence ID" value="AAF49952.1"/>
    <property type="molecule type" value="Genomic_DNA"/>
</dbReference>
<dbReference type="EMBL" id="AY089607">
    <property type="protein sequence ID" value="AAL90345.1"/>
    <property type="molecule type" value="mRNA"/>
</dbReference>
<dbReference type="RefSeq" id="NP_648553.1">
    <property type="nucleotide sequence ID" value="NM_140296.3"/>
</dbReference>
<dbReference type="SMR" id="Q9VTU4"/>
<dbReference type="BioGRID" id="64740">
    <property type="interactions" value="49"/>
</dbReference>
<dbReference type="FunCoup" id="Q9VTU4">
    <property type="interactions" value="2007"/>
</dbReference>
<dbReference type="IntAct" id="Q9VTU4">
    <property type="interactions" value="30"/>
</dbReference>
<dbReference type="STRING" id="7227.FBpp0075754"/>
<dbReference type="PaxDb" id="7227-FBpp0075754"/>
<dbReference type="DNASU" id="39386"/>
<dbReference type="EnsemblMetazoa" id="FBtr0076022">
    <property type="protein sequence ID" value="FBpp0075754"/>
    <property type="gene ID" value="FBgn0036258"/>
</dbReference>
<dbReference type="GeneID" id="39386"/>
<dbReference type="KEGG" id="dme:Dmel_CG5642"/>
<dbReference type="UCSC" id="CG5642-RA">
    <property type="organism name" value="d. melanogaster"/>
</dbReference>
<dbReference type="AGR" id="FB:FBgn0036258"/>
<dbReference type="CTD" id="51386"/>
<dbReference type="FlyBase" id="FBgn0036258">
    <property type="gene designation" value="eIF3l"/>
</dbReference>
<dbReference type="VEuPathDB" id="VectorBase:FBgn0036258"/>
<dbReference type="eggNOG" id="KOG3677">
    <property type="taxonomic scope" value="Eukaryota"/>
</dbReference>
<dbReference type="GeneTree" id="ENSGT00390000000411"/>
<dbReference type="HOGENOM" id="CLU_029210_0_1_1"/>
<dbReference type="InParanoid" id="Q9VTU4"/>
<dbReference type="OMA" id="AGWFIRN"/>
<dbReference type="OrthoDB" id="15082at2759"/>
<dbReference type="PhylomeDB" id="Q9VTU4"/>
<dbReference type="Reactome" id="R-DME-156827">
    <property type="pathway name" value="L13a-mediated translational silencing of Ceruloplasmin expression"/>
</dbReference>
<dbReference type="Reactome" id="R-DME-72649">
    <property type="pathway name" value="Translation initiation complex formation"/>
</dbReference>
<dbReference type="Reactome" id="R-DME-72689">
    <property type="pathway name" value="Formation of a pool of free 40S subunits"/>
</dbReference>
<dbReference type="Reactome" id="R-DME-72695">
    <property type="pathway name" value="Formation of the ternary complex, and subsequently, the 43S complex"/>
</dbReference>
<dbReference type="Reactome" id="R-DME-72702">
    <property type="pathway name" value="Ribosomal scanning and start codon recognition"/>
</dbReference>
<dbReference type="SignaLink" id="Q9VTU4"/>
<dbReference type="BioGRID-ORCS" id="39386">
    <property type="hits" value="0 hits in 1 CRISPR screen"/>
</dbReference>
<dbReference type="GenomeRNAi" id="39386"/>
<dbReference type="PRO" id="PR:Q9VTU4"/>
<dbReference type="Proteomes" id="UP000000803">
    <property type="component" value="Chromosome 3L"/>
</dbReference>
<dbReference type="Bgee" id="FBgn0036258">
    <property type="expression patterns" value="Expressed in eye disc (Drosophila) and 221 other cell types or tissues"/>
</dbReference>
<dbReference type="GO" id="GO:0005829">
    <property type="term" value="C:cytosol"/>
    <property type="evidence" value="ECO:0007005"/>
    <property type="project" value="FlyBase"/>
</dbReference>
<dbReference type="GO" id="GO:0016282">
    <property type="term" value="C:eukaryotic 43S preinitiation complex"/>
    <property type="evidence" value="ECO:0007669"/>
    <property type="project" value="UniProtKB-UniRule"/>
</dbReference>
<dbReference type="GO" id="GO:0033290">
    <property type="term" value="C:eukaryotic 48S preinitiation complex"/>
    <property type="evidence" value="ECO:0007669"/>
    <property type="project" value="UniProtKB-UniRule"/>
</dbReference>
<dbReference type="GO" id="GO:0005852">
    <property type="term" value="C:eukaryotic translation initiation factor 3 complex"/>
    <property type="evidence" value="ECO:0000250"/>
    <property type="project" value="FlyBase"/>
</dbReference>
<dbReference type="GO" id="GO:0003743">
    <property type="term" value="F:translation initiation factor activity"/>
    <property type="evidence" value="ECO:0007669"/>
    <property type="project" value="UniProtKB-UniRule"/>
</dbReference>
<dbReference type="GO" id="GO:0001732">
    <property type="term" value="P:formation of cytoplasmic translation initiation complex"/>
    <property type="evidence" value="ECO:0007669"/>
    <property type="project" value="UniProtKB-UniRule"/>
</dbReference>
<dbReference type="GO" id="GO:0006413">
    <property type="term" value="P:translational initiation"/>
    <property type="evidence" value="ECO:0000250"/>
    <property type="project" value="FlyBase"/>
</dbReference>
<dbReference type="HAMAP" id="MF_03011">
    <property type="entry name" value="eIF3l"/>
    <property type="match status" value="1"/>
</dbReference>
<dbReference type="InterPro" id="IPR019382">
    <property type="entry name" value="eIF3l"/>
</dbReference>
<dbReference type="InterPro" id="IPR000717">
    <property type="entry name" value="PCI_dom"/>
</dbReference>
<dbReference type="InterPro" id="IPR011990">
    <property type="entry name" value="TPR-like_helical_dom_sf"/>
</dbReference>
<dbReference type="PANTHER" id="PTHR13242">
    <property type="entry name" value="EUKARYOTIC TRANSLATION INITIATION FACTOR 3"/>
    <property type="match status" value="1"/>
</dbReference>
<dbReference type="PANTHER" id="PTHR13242:SF0">
    <property type="entry name" value="EUKARYOTIC TRANSLATION INITIATION FACTOR 3 SUBUNIT L"/>
    <property type="match status" value="1"/>
</dbReference>
<dbReference type="Pfam" id="PF10255">
    <property type="entry name" value="Paf67"/>
    <property type="match status" value="1"/>
</dbReference>
<dbReference type="SUPFAM" id="SSF48452">
    <property type="entry name" value="TPR-like"/>
    <property type="match status" value="1"/>
</dbReference>
<dbReference type="PROSITE" id="PS50250">
    <property type="entry name" value="PCI"/>
    <property type="match status" value="1"/>
</dbReference>
<comment type="function">
    <text evidence="1">Component of the eukaryotic translation initiation factor 3 (eIF-3) complex, which is involved in protein synthesis of a specialized repertoire of mRNAs and, together with other initiation factors, stimulates binding of mRNA and methionyl-tRNAi to the 40S ribosome. The eIF-3 complex specifically targets and initiates translation of a subset of mRNAs involved in cell proliferation.</text>
</comment>
<comment type="subunit">
    <text evidence="1">Component of the eukaryotic translation initiation factor 3 (eIF-3) complex. The eIF-3 complex interacts with pix.</text>
</comment>
<comment type="interaction">
    <interactant intactId="EBI-178321">
        <id>Q9VTU4</id>
    </interactant>
    <interactant intactId="EBI-137124">
        <id>Q9W2D9</id>
        <label>eIF3k</label>
    </interactant>
    <organismsDiffer>false</organismsDiffer>
    <experiments>3</experiments>
</comment>
<comment type="subcellular location">
    <subcellularLocation>
        <location evidence="1">Cytoplasm</location>
    </subcellularLocation>
</comment>
<comment type="similarity">
    <text evidence="1">Belongs to the eIF-3 subunit L family.</text>
</comment>
<reference key="1">
    <citation type="journal article" date="2000" name="Science">
        <title>The genome sequence of Drosophila melanogaster.</title>
        <authorList>
            <person name="Adams M.D."/>
            <person name="Celniker S.E."/>
            <person name="Holt R.A."/>
            <person name="Evans C.A."/>
            <person name="Gocayne J.D."/>
            <person name="Amanatides P.G."/>
            <person name="Scherer S.E."/>
            <person name="Li P.W."/>
            <person name="Hoskins R.A."/>
            <person name="Galle R.F."/>
            <person name="George R.A."/>
            <person name="Lewis S.E."/>
            <person name="Richards S."/>
            <person name="Ashburner M."/>
            <person name="Henderson S.N."/>
            <person name="Sutton G.G."/>
            <person name="Wortman J.R."/>
            <person name="Yandell M.D."/>
            <person name="Zhang Q."/>
            <person name="Chen L.X."/>
            <person name="Brandon R.C."/>
            <person name="Rogers Y.-H.C."/>
            <person name="Blazej R.G."/>
            <person name="Champe M."/>
            <person name="Pfeiffer B.D."/>
            <person name="Wan K.H."/>
            <person name="Doyle C."/>
            <person name="Baxter E.G."/>
            <person name="Helt G."/>
            <person name="Nelson C.R."/>
            <person name="Miklos G.L.G."/>
            <person name="Abril J.F."/>
            <person name="Agbayani A."/>
            <person name="An H.-J."/>
            <person name="Andrews-Pfannkoch C."/>
            <person name="Baldwin D."/>
            <person name="Ballew R.M."/>
            <person name="Basu A."/>
            <person name="Baxendale J."/>
            <person name="Bayraktaroglu L."/>
            <person name="Beasley E.M."/>
            <person name="Beeson K.Y."/>
            <person name="Benos P.V."/>
            <person name="Berman B.P."/>
            <person name="Bhandari D."/>
            <person name="Bolshakov S."/>
            <person name="Borkova D."/>
            <person name="Botchan M.R."/>
            <person name="Bouck J."/>
            <person name="Brokstein P."/>
            <person name="Brottier P."/>
            <person name="Burtis K.C."/>
            <person name="Busam D.A."/>
            <person name="Butler H."/>
            <person name="Cadieu E."/>
            <person name="Center A."/>
            <person name="Chandra I."/>
            <person name="Cherry J.M."/>
            <person name="Cawley S."/>
            <person name="Dahlke C."/>
            <person name="Davenport L.B."/>
            <person name="Davies P."/>
            <person name="de Pablos B."/>
            <person name="Delcher A."/>
            <person name="Deng Z."/>
            <person name="Mays A.D."/>
            <person name="Dew I."/>
            <person name="Dietz S.M."/>
            <person name="Dodson K."/>
            <person name="Doup L.E."/>
            <person name="Downes M."/>
            <person name="Dugan-Rocha S."/>
            <person name="Dunkov B.C."/>
            <person name="Dunn P."/>
            <person name="Durbin K.J."/>
            <person name="Evangelista C.C."/>
            <person name="Ferraz C."/>
            <person name="Ferriera S."/>
            <person name="Fleischmann W."/>
            <person name="Fosler C."/>
            <person name="Gabrielian A.E."/>
            <person name="Garg N.S."/>
            <person name="Gelbart W.M."/>
            <person name="Glasser K."/>
            <person name="Glodek A."/>
            <person name="Gong F."/>
            <person name="Gorrell J.H."/>
            <person name="Gu Z."/>
            <person name="Guan P."/>
            <person name="Harris M."/>
            <person name="Harris N.L."/>
            <person name="Harvey D.A."/>
            <person name="Heiman T.J."/>
            <person name="Hernandez J.R."/>
            <person name="Houck J."/>
            <person name="Hostin D."/>
            <person name="Houston K.A."/>
            <person name="Howland T.J."/>
            <person name="Wei M.-H."/>
            <person name="Ibegwam C."/>
            <person name="Jalali M."/>
            <person name="Kalush F."/>
            <person name="Karpen G.H."/>
            <person name="Ke Z."/>
            <person name="Kennison J.A."/>
            <person name="Ketchum K.A."/>
            <person name="Kimmel B.E."/>
            <person name="Kodira C.D."/>
            <person name="Kraft C.L."/>
            <person name="Kravitz S."/>
            <person name="Kulp D."/>
            <person name="Lai Z."/>
            <person name="Lasko P."/>
            <person name="Lei Y."/>
            <person name="Levitsky A.A."/>
            <person name="Li J.H."/>
            <person name="Li Z."/>
            <person name="Liang Y."/>
            <person name="Lin X."/>
            <person name="Liu X."/>
            <person name="Mattei B."/>
            <person name="McIntosh T.C."/>
            <person name="McLeod M.P."/>
            <person name="McPherson D."/>
            <person name="Merkulov G."/>
            <person name="Milshina N.V."/>
            <person name="Mobarry C."/>
            <person name="Morris J."/>
            <person name="Moshrefi A."/>
            <person name="Mount S.M."/>
            <person name="Moy M."/>
            <person name="Murphy B."/>
            <person name="Murphy L."/>
            <person name="Muzny D.M."/>
            <person name="Nelson D.L."/>
            <person name="Nelson D.R."/>
            <person name="Nelson K.A."/>
            <person name="Nixon K."/>
            <person name="Nusskern D.R."/>
            <person name="Pacleb J.M."/>
            <person name="Palazzolo M."/>
            <person name="Pittman G.S."/>
            <person name="Pan S."/>
            <person name="Pollard J."/>
            <person name="Puri V."/>
            <person name="Reese M.G."/>
            <person name="Reinert K."/>
            <person name="Remington K."/>
            <person name="Saunders R.D.C."/>
            <person name="Scheeler F."/>
            <person name="Shen H."/>
            <person name="Shue B.C."/>
            <person name="Siden-Kiamos I."/>
            <person name="Simpson M."/>
            <person name="Skupski M.P."/>
            <person name="Smith T.J."/>
            <person name="Spier E."/>
            <person name="Spradling A.C."/>
            <person name="Stapleton M."/>
            <person name="Strong R."/>
            <person name="Sun E."/>
            <person name="Svirskas R."/>
            <person name="Tector C."/>
            <person name="Turner R."/>
            <person name="Venter E."/>
            <person name="Wang A.H."/>
            <person name="Wang X."/>
            <person name="Wang Z.-Y."/>
            <person name="Wassarman D.A."/>
            <person name="Weinstock G.M."/>
            <person name="Weissenbach J."/>
            <person name="Williams S.M."/>
            <person name="Woodage T."/>
            <person name="Worley K.C."/>
            <person name="Wu D."/>
            <person name="Yang S."/>
            <person name="Yao Q.A."/>
            <person name="Ye J."/>
            <person name="Yeh R.-F."/>
            <person name="Zaveri J.S."/>
            <person name="Zhan M."/>
            <person name="Zhang G."/>
            <person name="Zhao Q."/>
            <person name="Zheng L."/>
            <person name="Zheng X.H."/>
            <person name="Zhong F.N."/>
            <person name="Zhong W."/>
            <person name="Zhou X."/>
            <person name="Zhu S.C."/>
            <person name="Zhu X."/>
            <person name="Smith H.O."/>
            <person name="Gibbs R.A."/>
            <person name="Myers E.W."/>
            <person name="Rubin G.M."/>
            <person name="Venter J.C."/>
        </authorList>
    </citation>
    <scope>NUCLEOTIDE SEQUENCE [LARGE SCALE GENOMIC DNA]</scope>
    <source>
        <strain>Berkeley</strain>
    </source>
</reference>
<reference key="2">
    <citation type="journal article" date="2002" name="Genome Biol.">
        <title>Annotation of the Drosophila melanogaster euchromatic genome: a systematic review.</title>
        <authorList>
            <person name="Misra S."/>
            <person name="Crosby M.A."/>
            <person name="Mungall C.J."/>
            <person name="Matthews B.B."/>
            <person name="Campbell K.S."/>
            <person name="Hradecky P."/>
            <person name="Huang Y."/>
            <person name="Kaminker J.S."/>
            <person name="Millburn G.H."/>
            <person name="Prochnik S.E."/>
            <person name="Smith C.D."/>
            <person name="Tupy J.L."/>
            <person name="Whitfield E.J."/>
            <person name="Bayraktaroglu L."/>
            <person name="Berman B.P."/>
            <person name="Bettencourt B.R."/>
            <person name="Celniker S.E."/>
            <person name="de Grey A.D.N.J."/>
            <person name="Drysdale R.A."/>
            <person name="Harris N.L."/>
            <person name="Richter J."/>
            <person name="Russo S."/>
            <person name="Schroeder A.J."/>
            <person name="Shu S.Q."/>
            <person name="Stapleton M."/>
            <person name="Yamada C."/>
            <person name="Ashburner M."/>
            <person name="Gelbart W.M."/>
            <person name="Rubin G.M."/>
            <person name="Lewis S.E."/>
        </authorList>
    </citation>
    <scope>GENOME REANNOTATION</scope>
    <source>
        <strain>Berkeley</strain>
    </source>
</reference>
<reference key="3">
    <citation type="journal article" date="2002" name="Genome Biol.">
        <title>A Drosophila full-length cDNA resource.</title>
        <authorList>
            <person name="Stapleton M."/>
            <person name="Carlson J.W."/>
            <person name="Brokstein P."/>
            <person name="Yu C."/>
            <person name="Champe M."/>
            <person name="George R.A."/>
            <person name="Guarin H."/>
            <person name="Kronmiller B."/>
            <person name="Pacleb J.M."/>
            <person name="Park S."/>
            <person name="Wan K.H."/>
            <person name="Rubin G.M."/>
            <person name="Celniker S.E."/>
        </authorList>
    </citation>
    <scope>NUCLEOTIDE SEQUENCE [LARGE SCALE MRNA]</scope>
    <source>
        <strain>Berkeley</strain>
        <tissue>Embryo</tissue>
    </source>
</reference>
<gene>
    <name evidence="1" type="primary">eIF3l</name>
    <name type="ORF">CG5642</name>
</gene>
<feature type="chain" id="PRO_0000364245" description="Eukaryotic translation initiation factor 3 subunit L">
    <location>
        <begin position="1"/>
        <end position="539"/>
    </location>
</feature>
<feature type="domain" description="PCI" evidence="2">
    <location>
        <begin position="306"/>
        <end position="514"/>
    </location>
</feature>
<evidence type="ECO:0000255" key="1">
    <source>
        <dbReference type="HAMAP-Rule" id="MF_03011"/>
    </source>
</evidence>
<evidence type="ECO:0000255" key="2">
    <source>
        <dbReference type="PROSITE-ProRule" id="PRU01185"/>
    </source>
</evidence>